<accession>P81685</accession>
<proteinExistence type="inferred from homology"/>
<sequence>MKFYNIFVFVALILAITIGQSEAGWLKKIGKKIERVGQHTRDATIQGLGVAQQAANVAATARG</sequence>
<organism>
    <name type="scientific">Drosophila mauritiana</name>
    <name type="common">Fruit fly</name>
    <dbReference type="NCBI Taxonomy" id="7226"/>
    <lineage>
        <taxon>Eukaryota</taxon>
        <taxon>Metazoa</taxon>
        <taxon>Ecdysozoa</taxon>
        <taxon>Arthropoda</taxon>
        <taxon>Hexapoda</taxon>
        <taxon>Insecta</taxon>
        <taxon>Pterygota</taxon>
        <taxon>Neoptera</taxon>
        <taxon>Endopterygota</taxon>
        <taxon>Diptera</taxon>
        <taxon>Brachycera</taxon>
        <taxon>Muscomorpha</taxon>
        <taxon>Ephydroidea</taxon>
        <taxon>Drosophilidae</taxon>
        <taxon>Drosophila</taxon>
        <taxon>Sophophora</taxon>
    </lineage>
</organism>
<feature type="signal peptide" evidence="2">
    <location>
        <begin position="1"/>
        <end position="23"/>
    </location>
</feature>
<feature type="chain" id="PRO_0000004840" description="Cecropin-A1">
    <location>
        <begin position="24"/>
        <end position="62"/>
    </location>
</feature>
<feature type="modified residue" description="Arginine amide" evidence="1">
    <location>
        <position position="62"/>
    </location>
</feature>
<feature type="sequence variant" description="In strain: M31.">
    <original>K</original>
    <variation>N</variation>
    <location>
        <position position="2"/>
    </location>
</feature>
<feature type="sequence variant" description="In strain: M31.">
    <original>V</original>
    <variation>I</variation>
    <location>
        <position position="50"/>
    </location>
</feature>
<comment type="function">
    <text evidence="1">Cecropins have lytic and antibacterial activity against several Gram-positive and Gram-negative bacteria.</text>
</comment>
<comment type="subcellular location">
    <subcellularLocation>
        <location>Secreted</location>
    </subcellularLocation>
</comment>
<comment type="similarity">
    <text evidence="3">Belongs to the cecropin family.</text>
</comment>
<dbReference type="EMBL" id="AF018975">
    <property type="protein sequence ID" value="AAB82472.1"/>
    <property type="molecule type" value="Genomic_DNA"/>
</dbReference>
<dbReference type="EMBL" id="Y16863">
    <property type="protein sequence ID" value="CAA76488.1"/>
    <property type="molecule type" value="Genomic_DNA"/>
</dbReference>
<dbReference type="Proteomes" id="UP000515162">
    <property type="component" value="Unplaced"/>
</dbReference>
<dbReference type="GO" id="GO:0005576">
    <property type="term" value="C:extracellular region"/>
    <property type="evidence" value="ECO:0000250"/>
    <property type="project" value="UniProtKB"/>
</dbReference>
<dbReference type="GO" id="GO:0005615">
    <property type="term" value="C:extracellular space"/>
    <property type="evidence" value="ECO:0007669"/>
    <property type="project" value="TreeGrafter"/>
</dbReference>
<dbReference type="GO" id="GO:0019731">
    <property type="term" value="P:antibacterial humoral response"/>
    <property type="evidence" value="ECO:0007669"/>
    <property type="project" value="InterPro"/>
</dbReference>
<dbReference type="GO" id="GO:0050829">
    <property type="term" value="P:defense response to Gram-negative bacterium"/>
    <property type="evidence" value="ECO:0007669"/>
    <property type="project" value="UniProtKB-ARBA"/>
</dbReference>
<dbReference type="GO" id="GO:0050830">
    <property type="term" value="P:defense response to Gram-positive bacterium"/>
    <property type="evidence" value="ECO:0007669"/>
    <property type="project" value="TreeGrafter"/>
</dbReference>
<dbReference type="GO" id="GO:0045087">
    <property type="term" value="P:innate immune response"/>
    <property type="evidence" value="ECO:0007669"/>
    <property type="project" value="UniProtKB-KW"/>
</dbReference>
<dbReference type="InterPro" id="IPR000875">
    <property type="entry name" value="Cecropin"/>
</dbReference>
<dbReference type="InterPro" id="IPR020400">
    <property type="entry name" value="Cecropin_insect"/>
</dbReference>
<dbReference type="PANTHER" id="PTHR38329">
    <property type="entry name" value="CECROPIN-A1-RELATED"/>
    <property type="match status" value="1"/>
</dbReference>
<dbReference type="PANTHER" id="PTHR38329:SF1">
    <property type="entry name" value="CECROPIN-A1-RELATED"/>
    <property type="match status" value="1"/>
</dbReference>
<dbReference type="Pfam" id="PF00272">
    <property type="entry name" value="Cecropin"/>
    <property type="match status" value="1"/>
</dbReference>
<dbReference type="PROSITE" id="PS00268">
    <property type="entry name" value="CECROPIN"/>
    <property type="match status" value="1"/>
</dbReference>
<evidence type="ECO:0000250" key="1"/>
<evidence type="ECO:0000255" key="2"/>
<evidence type="ECO:0000305" key="3"/>
<keyword id="KW-0027">Amidation</keyword>
<keyword id="KW-0044">Antibiotic</keyword>
<keyword id="KW-0929">Antimicrobial</keyword>
<keyword id="KW-0391">Immunity</keyword>
<keyword id="KW-0399">Innate immunity</keyword>
<keyword id="KW-0964">Secreted</keyword>
<keyword id="KW-0732">Signal</keyword>
<name>CECA1_DROMA</name>
<gene>
    <name type="primary">CecA1</name>
</gene>
<protein>
    <recommendedName>
        <fullName>Cecropin-A1</fullName>
    </recommendedName>
</protein>
<reference key="1">
    <citation type="journal article" date="1997" name="Genetics">
        <title>Molecular population genetics of Drosophila immune system genes.</title>
        <authorList>
            <person name="Clark A.G."/>
            <person name="Wang L."/>
        </authorList>
    </citation>
    <scope>NUCLEOTIDE SEQUENCE [GENOMIC DNA]</scope>
    <source>
        <strain>M31</strain>
    </source>
</reference>
<reference key="2">
    <citation type="journal article" date="1998" name="Genetics">
        <title>Molecular evolution of the Cecropin multigene family in Drosophila: functional genes vs pseudogenes.</title>
        <authorList>
            <person name="Ramos-Onsins S."/>
            <person name="Aguade M."/>
        </authorList>
    </citation>
    <scope>NUCLEOTIDE SEQUENCE [GENOMIC DNA]</scope>
    <source>
        <strain>Montemayor</strain>
    </source>
</reference>